<dbReference type="EMBL" id="AE009948">
    <property type="protein sequence ID" value="AAM99011.1"/>
    <property type="molecule type" value="Genomic_DNA"/>
</dbReference>
<dbReference type="RefSeq" id="NP_687139.1">
    <property type="nucleotide sequence ID" value="NC_004116.1"/>
</dbReference>
<dbReference type="RefSeq" id="WP_000599671.1">
    <property type="nucleotide sequence ID" value="NC_004116.1"/>
</dbReference>
<dbReference type="SMR" id="Q8E294"/>
<dbReference type="STRING" id="208435.SAG0103"/>
<dbReference type="KEGG" id="sag:SAG0103"/>
<dbReference type="PATRIC" id="fig|208435.3.peg.102"/>
<dbReference type="HOGENOM" id="CLU_106658_0_0_9"/>
<dbReference type="OrthoDB" id="9803187at2"/>
<dbReference type="Proteomes" id="UP000000821">
    <property type="component" value="Chromosome"/>
</dbReference>
<dbReference type="Gene3D" id="3.40.50.10360">
    <property type="entry name" value="Hypothetical protein TT1679"/>
    <property type="match status" value="1"/>
</dbReference>
<dbReference type="HAMAP" id="MF_00800">
    <property type="entry name" value="UPF0340"/>
    <property type="match status" value="1"/>
</dbReference>
<dbReference type="InterPro" id="IPR028345">
    <property type="entry name" value="Antibiotic_NAT-like"/>
</dbReference>
<dbReference type="InterPro" id="IPR006340">
    <property type="entry name" value="DUF436"/>
</dbReference>
<dbReference type="NCBIfam" id="TIGR01440">
    <property type="entry name" value="TIGR01440 family protein"/>
    <property type="match status" value="1"/>
</dbReference>
<dbReference type="Pfam" id="PF04260">
    <property type="entry name" value="DUF436"/>
    <property type="match status" value="1"/>
</dbReference>
<dbReference type="PIRSF" id="PIRSF007510">
    <property type="entry name" value="UCP007510"/>
    <property type="match status" value="1"/>
</dbReference>
<dbReference type="SUPFAM" id="SSF110710">
    <property type="entry name" value="TTHA0583/YokD-like"/>
    <property type="match status" value="1"/>
</dbReference>
<comment type="similarity">
    <text evidence="1">Belongs to the UPF0340 family.</text>
</comment>
<keyword id="KW-1185">Reference proteome</keyword>
<proteinExistence type="inferred from homology"/>
<evidence type="ECO:0000255" key="1">
    <source>
        <dbReference type="HAMAP-Rule" id="MF_00800"/>
    </source>
</evidence>
<name>Y103_STRA5</name>
<organism>
    <name type="scientific">Streptococcus agalactiae serotype V (strain ATCC BAA-611 / 2603 V/R)</name>
    <dbReference type="NCBI Taxonomy" id="208435"/>
    <lineage>
        <taxon>Bacteria</taxon>
        <taxon>Bacillati</taxon>
        <taxon>Bacillota</taxon>
        <taxon>Bacilli</taxon>
        <taxon>Lactobacillales</taxon>
        <taxon>Streptococcaceae</taxon>
        <taxon>Streptococcus</taxon>
    </lineage>
</organism>
<gene>
    <name type="ordered locus">SAG0103</name>
</gene>
<accession>Q8E294</accession>
<protein>
    <recommendedName>
        <fullName evidence="1">UPF0340 protein SAG0103</fullName>
    </recommendedName>
</protein>
<feature type="chain" id="PRO_0000213019" description="UPF0340 protein SAG0103">
    <location>
        <begin position="1"/>
        <end position="189"/>
    </location>
</feature>
<reference key="1">
    <citation type="journal article" date="2002" name="Proc. Natl. Acad. Sci. U.S.A.">
        <title>Complete genome sequence and comparative genomic analysis of an emerging human pathogen, serotype V Streptococcus agalactiae.</title>
        <authorList>
            <person name="Tettelin H."/>
            <person name="Masignani V."/>
            <person name="Cieslewicz M.J."/>
            <person name="Eisen J.A."/>
            <person name="Peterson S.N."/>
            <person name="Wessels M.R."/>
            <person name="Paulsen I.T."/>
            <person name="Nelson K.E."/>
            <person name="Margarit I."/>
            <person name="Read T.D."/>
            <person name="Madoff L.C."/>
            <person name="Wolf A.M."/>
            <person name="Beanan M.J."/>
            <person name="Brinkac L.M."/>
            <person name="Daugherty S.C."/>
            <person name="DeBoy R.T."/>
            <person name="Durkin A.S."/>
            <person name="Kolonay J.F."/>
            <person name="Madupu R."/>
            <person name="Lewis M.R."/>
            <person name="Radune D."/>
            <person name="Fedorova N.B."/>
            <person name="Scanlan D."/>
            <person name="Khouri H.M."/>
            <person name="Mulligan S."/>
            <person name="Carty H.A."/>
            <person name="Cline R.T."/>
            <person name="Van Aken S.E."/>
            <person name="Gill J."/>
            <person name="Scarselli M."/>
            <person name="Mora M."/>
            <person name="Iacobini E.T."/>
            <person name="Brettoni C."/>
            <person name="Galli G."/>
            <person name="Mariani M."/>
            <person name="Vegni F."/>
            <person name="Maione D."/>
            <person name="Rinaudo D."/>
            <person name="Rappuoli R."/>
            <person name="Telford J.L."/>
            <person name="Kasper D.L."/>
            <person name="Grandi G."/>
            <person name="Fraser C.M."/>
        </authorList>
    </citation>
    <scope>NUCLEOTIDE SEQUENCE [LARGE SCALE GENOMIC DNA]</scope>
    <source>
        <strain>ATCC BAA-611 / 2603 V/R</strain>
    </source>
</reference>
<sequence>MILDYNKLKQETKAIVVDIIERSALKKGQIFVLGLSSSEVSGGLIGKNSSSEIGEIIVEVILKELHSRGIYLAVQGCEHVNRALVVEAELAERQQLEVVNVVPNLHAGGSGQVAAFKLMTSPVEVEEIVAHAGIDIGDTSIGMHIKRVQVPLIPISRELGGAHVTALASRPKLIGGARAGYTSDPIRKF</sequence>